<name>PTCD2_PONAB</name>
<reference key="1">
    <citation type="submission" date="2004-11" db="EMBL/GenBank/DDBJ databases">
        <authorList>
            <consortium name="The German cDNA consortium"/>
        </authorList>
    </citation>
    <scope>NUCLEOTIDE SEQUENCE [LARGE SCALE MRNA]</scope>
    <source>
        <tissue>Brain cortex</tissue>
    </source>
</reference>
<feature type="chain" id="PRO_0000344052" description="Pentatricopeptide repeat-containing protein 2, mitochondrial">
    <location>
        <begin position="1"/>
        <end position="383"/>
    </location>
</feature>
<feature type="repeat" description="PPR">
    <location>
        <begin position="161"/>
        <end position="195"/>
    </location>
</feature>
<feature type="modified residue" description="Phosphoserine" evidence="2">
    <location>
        <position position="377"/>
    </location>
</feature>
<sequence length="383" mass="43199">MAAALRPSNRVLLQALQTLVYPGVGGSGSVSCRCPVGAKRYLLTDNVVKLKEFQQKKVAIACNLSGTKEMYFRNLKEKLTQNKLILKGELITLLHLCESRDHVELAKNVIYRYHAENKNFTLGEYKFGPLFMRLCYELNLEESAVELVKDQHLRGFFSDSTSFNILMDMLFIKGKYKSALEVLIEMKNQNVKFTTDTYVLAFAICYKLNSPESFKICTILGEKALLKGEILSRRASCFAVALALNQNEVAKAMSIFSQIMNPESIACVNLNIIIHIQSNMLENLIKTLNNAAEGNLSKFVKRNVFSEEVLAKVREKVKDVPALVAKFDEIYGILHITGQVTTDSLDAVLCHTPKDRKSHMLLLNKRMFSRRTSQPLSQSLLAE</sequence>
<proteinExistence type="evidence at transcript level"/>
<accession>Q5R503</accession>
<keyword id="KW-0496">Mitochondrion</keyword>
<keyword id="KW-0507">mRNA processing</keyword>
<keyword id="KW-0597">Phosphoprotein</keyword>
<keyword id="KW-1185">Reference proteome</keyword>
<dbReference type="EMBL" id="CR861082">
    <property type="protein sequence ID" value="CAH93163.1"/>
    <property type="molecule type" value="mRNA"/>
</dbReference>
<dbReference type="RefSeq" id="NP_001126866.1">
    <property type="nucleotide sequence ID" value="NM_001133394.1"/>
</dbReference>
<dbReference type="FunCoup" id="Q5R503">
    <property type="interactions" value="1883"/>
</dbReference>
<dbReference type="STRING" id="9601.ENSPPYP00000017373"/>
<dbReference type="GeneID" id="100173875"/>
<dbReference type="KEGG" id="pon:100173875"/>
<dbReference type="CTD" id="79810"/>
<dbReference type="InParanoid" id="Q5R503"/>
<dbReference type="OrthoDB" id="6073372at2759"/>
<dbReference type="Proteomes" id="UP000001595">
    <property type="component" value="Unplaced"/>
</dbReference>
<dbReference type="GO" id="GO:0005739">
    <property type="term" value="C:mitochondrion"/>
    <property type="evidence" value="ECO:0000250"/>
    <property type="project" value="UniProtKB"/>
</dbReference>
<dbReference type="GO" id="GO:0003723">
    <property type="term" value="F:RNA binding"/>
    <property type="evidence" value="ECO:0007669"/>
    <property type="project" value="TreeGrafter"/>
</dbReference>
<dbReference type="GO" id="GO:0007005">
    <property type="term" value="P:mitochondrion organization"/>
    <property type="evidence" value="ECO:0007669"/>
    <property type="project" value="TreeGrafter"/>
</dbReference>
<dbReference type="GO" id="GO:0006397">
    <property type="term" value="P:mRNA processing"/>
    <property type="evidence" value="ECO:0007669"/>
    <property type="project" value="UniProtKB-KW"/>
</dbReference>
<dbReference type="GO" id="GO:0050684">
    <property type="term" value="P:regulation of mRNA processing"/>
    <property type="evidence" value="ECO:0000250"/>
    <property type="project" value="UniProtKB"/>
</dbReference>
<dbReference type="FunFam" id="1.25.40.10:FF:001595">
    <property type="entry name" value="Pentatricopeptide repeat-containing protein 2, mitochondrial"/>
    <property type="match status" value="1"/>
</dbReference>
<dbReference type="Gene3D" id="1.25.40.10">
    <property type="entry name" value="Tetratricopeptide repeat domain"/>
    <property type="match status" value="1"/>
</dbReference>
<dbReference type="InterPro" id="IPR034913">
    <property type="entry name" value="mS27/PTCD2"/>
</dbReference>
<dbReference type="InterPro" id="IPR002885">
    <property type="entry name" value="Pentatricopeptide_rpt"/>
</dbReference>
<dbReference type="InterPro" id="IPR034629">
    <property type="entry name" value="PTCD2"/>
</dbReference>
<dbReference type="InterPro" id="IPR011990">
    <property type="entry name" value="TPR-like_helical_dom_sf"/>
</dbReference>
<dbReference type="NCBIfam" id="TIGR00756">
    <property type="entry name" value="PPR"/>
    <property type="match status" value="1"/>
</dbReference>
<dbReference type="PANTHER" id="PTHR14700">
    <property type="entry name" value="PENTATRICOPEPTIDE REPEAT-CONTAINING PROTEIN 2, MITOCHONDRIAL"/>
    <property type="match status" value="1"/>
</dbReference>
<dbReference type="PANTHER" id="PTHR14700:SF0">
    <property type="entry name" value="PENTATRICOPEPTIDE REPEAT-CONTAINING PROTEIN 2, MITOCHONDRIAL"/>
    <property type="match status" value="1"/>
</dbReference>
<dbReference type="Pfam" id="PF10037">
    <property type="entry name" value="MRP-S27"/>
    <property type="match status" value="1"/>
</dbReference>
<dbReference type="PROSITE" id="PS51375">
    <property type="entry name" value="PPR"/>
    <property type="match status" value="1"/>
</dbReference>
<protein>
    <recommendedName>
        <fullName>Pentatricopeptide repeat-containing protein 2, mitochondrial</fullName>
    </recommendedName>
</protein>
<evidence type="ECO:0000250" key="1"/>
<evidence type="ECO:0000250" key="2">
    <source>
        <dbReference type="UniProtKB" id="Q8WV60"/>
    </source>
</evidence>
<evidence type="ECO:0000305" key="3"/>
<organism>
    <name type="scientific">Pongo abelii</name>
    <name type="common">Sumatran orangutan</name>
    <name type="synonym">Pongo pygmaeus abelii</name>
    <dbReference type="NCBI Taxonomy" id="9601"/>
    <lineage>
        <taxon>Eukaryota</taxon>
        <taxon>Metazoa</taxon>
        <taxon>Chordata</taxon>
        <taxon>Craniata</taxon>
        <taxon>Vertebrata</taxon>
        <taxon>Euteleostomi</taxon>
        <taxon>Mammalia</taxon>
        <taxon>Eutheria</taxon>
        <taxon>Euarchontoglires</taxon>
        <taxon>Primates</taxon>
        <taxon>Haplorrhini</taxon>
        <taxon>Catarrhini</taxon>
        <taxon>Hominidae</taxon>
        <taxon>Pongo</taxon>
    </lineage>
</organism>
<comment type="function">
    <text evidence="1">Involved in mitochondrial RNA maturation and mitochondrial respiratory chain function.</text>
</comment>
<comment type="subcellular location">
    <subcellularLocation>
        <location evidence="1">Mitochondrion</location>
    </subcellularLocation>
</comment>
<comment type="similarity">
    <text evidence="3">Belongs to the PTCD2 family.</text>
</comment>
<gene>
    <name type="primary">PTCD2</name>
</gene>